<comment type="subcellular location">
    <subcellularLocation>
        <location evidence="3">Cytoplasm</location>
    </subcellularLocation>
    <subcellularLocation>
        <location evidence="1 3">Nucleus</location>
    </subcellularLocation>
</comment>
<comment type="similarity">
    <text evidence="5">Belongs to the ASG1 family.</text>
</comment>
<dbReference type="EMBL" id="CU329671">
    <property type="protein sequence ID" value="CAA19035.1"/>
    <property type="molecule type" value="Genomic_DNA"/>
</dbReference>
<dbReference type="PIR" id="T39608">
    <property type="entry name" value="T39608"/>
</dbReference>
<dbReference type="SMR" id="O60130"/>
<dbReference type="BioGRID" id="276187">
    <property type="interactions" value="93"/>
</dbReference>
<dbReference type="FunCoup" id="O60130">
    <property type="interactions" value="15"/>
</dbReference>
<dbReference type="iPTMnet" id="O60130"/>
<dbReference type="PaxDb" id="4896-SPBC16G5.16.1"/>
<dbReference type="EnsemblFungi" id="SPBC16G5.16.1">
    <property type="protein sequence ID" value="SPBC16G5.16.1:pep"/>
    <property type="gene ID" value="SPBC16G5.16"/>
</dbReference>
<dbReference type="KEGG" id="spo:2539631"/>
<dbReference type="PomBase" id="SPBC16G5.16"/>
<dbReference type="VEuPathDB" id="FungiDB:SPBC16G5.16"/>
<dbReference type="eggNOG" id="ENOG502QSY2">
    <property type="taxonomic scope" value="Eukaryota"/>
</dbReference>
<dbReference type="HOGENOM" id="CLU_342607_0_0_1"/>
<dbReference type="InParanoid" id="O60130"/>
<dbReference type="OMA" id="CCHELGL"/>
<dbReference type="PhylomeDB" id="O60130"/>
<dbReference type="PRO" id="PR:O60130"/>
<dbReference type="Proteomes" id="UP000002485">
    <property type="component" value="Chromosome II"/>
</dbReference>
<dbReference type="GO" id="GO:0005829">
    <property type="term" value="C:cytosol"/>
    <property type="evidence" value="ECO:0007005"/>
    <property type="project" value="PomBase"/>
</dbReference>
<dbReference type="GO" id="GO:0005634">
    <property type="term" value="C:nucleus"/>
    <property type="evidence" value="ECO:0007005"/>
    <property type="project" value="PomBase"/>
</dbReference>
<dbReference type="GO" id="GO:0000981">
    <property type="term" value="F:DNA-binding transcription factor activity, RNA polymerase II-specific"/>
    <property type="evidence" value="ECO:0000318"/>
    <property type="project" value="GO_Central"/>
</dbReference>
<dbReference type="GO" id="GO:0000978">
    <property type="term" value="F:RNA polymerase II cis-regulatory region sequence-specific DNA binding"/>
    <property type="evidence" value="ECO:0000255"/>
    <property type="project" value="PomBase"/>
</dbReference>
<dbReference type="GO" id="GO:0043565">
    <property type="term" value="F:sequence-specific DNA binding"/>
    <property type="evidence" value="ECO:0000318"/>
    <property type="project" value="GO_Central"/>
</dbReference>
<dbReference type="GO" id="GO:0008270">
    <property type="term" value="F:zinc ion binding"/>
    <property type="evidence" value="ECO:0000255"/>
    <property type="project" value="PomBase"/>
</dbReference>
<dbReference type="GO" id="GO:0006351">
    <property type="term" value="P:DNA-templated transcription"/>
    <property type="evidence" value="ECO:0007669"/>
    <property type="project" value="InterPro"/>
</dbReference>
<dbReference type="GO" id="GO:0045944">
    <property type="term" value="P:positive regulation of transcription by RNA polymerase II"/>
    <property type="evidence" value="ECO:0000318"/>
    <property type="project" value="GO_Central"/>
</dbReference>
<dbReference type="CDD" id="cd12148">
    <property type="entry name" value="fungal_TF_MHR"/>
    <property type="match status" value="1"/>
</dbReference>
<dbReference type="CDD" id="cd00067">
    <property type="entry name" value="GAL4"/>
    <property type="match status" value="1"/>
</dbReference>
<dbReference type="Gene3D" id="4.10.240.10">
    <property type="entry name" value="Zn(2)-C6 fungal-type DNA-binding domain"/>
    <property type="match status" value="1"/>
</dbReference>
<dbReference type="InterPro" id="IPR051711">
    <property type="entry name" value="Stress_Response_Reg"/>
</dbReference>
<dbReference type="InterPro" id="IPR007219">
    <property type="entry name" value="Transcription_factor_dom_fun"/>
</dbReference>
<dbReference type="InterPro" id="IPR036864">
    <property type="entry name" value="Zn2-C6_fun-type_DNA-bd_sf"/>
</dbReference>
<dbReference type="InterPro" id="IPR001138">
    <property type="entry name" value="Zn2Cys6_DnaBD"/>
</dbReference>
<dbReference type="PANTHER" id="PTHR47540:SF1">
    <property type="entry name" value="ACTIVATOR OF STRESS GENES 1-RELATED"/>
    <property type="match status" value="1"/>
</dbReference>
<dbReference type="PANTHER" id="PTHR47540">
    <property type="entry name" value="THIAMINE REPRESSIBLE GENES REGULATORY PROTEIN THI5"/>
    <property type="match status" value="1"/>
</dbReference>
<dbReference type="Pfam" id="PF04082">
    <property type="entry name" value="Fungal_trans"/>
    <property type="match status" value="1"/>
</dbReference>
<dbReference type="Pfam" id="PF00172">
    <property type="entry name" value="Zn_clus"/>
    <property type="match status" value="1"/>
</dbReference>
<dbReference type="SMART" id="SM00906">
    <property type="entry name" value="Fungal_trans"/>
    <property type="match status" value="1"/>
</dbReference>
<dbReference type="SMART" id="SM00066">
    <property type="entry name" value="GAL4"/>
    <property type="match status" value="1"/>
</dbReference>
<dbReference type="SUPFAM" id="SSF57701">
    <property type="entry name" value="Zn2/Cys6 DNA-binding domain"/>
    <property type="match status" value="1"/>
</dbReference>
<dbReference type="PROSITE" id="PS00463">
    <property type="entry name" value="ZN2_CY6_FUNGAL_1"/>
    <property type="match status" value="1"/>
</dbReference>
<dbReference type="PROSITE" id="PS50048">
    <property type="entry name" value="ZN2_CY6_FUNGAL_2"/>
    <property type="match status" value="1"/>
</dbReference>
<evidence type="ECO:0000255" key="1">
    <source>
        <dbReference type="PROSITE-ProRule" id="PRU00227"/>
    </source>
</evidence>
<evidence type="ECO:0000256" key="2">
    <source>
        <dbReference type="SAM" id="MobiDB-lite"/>
    </source>
</evidence>
<evidence type="ECO:0000269" key="3">
    <source>
    </source>
</evidence>
<evidence type="ECO:0000269" key="4">
    <source>
    </source>
</evidence>
<evidence type="ECO:0000305" key="5"/>
<name>YH7G_SCHPO</name>
<feature type="chain" id="PRO_0000310383" description="Putative transcriptional regulatory protein C16G5.16">
    <location>
        <begin position="1"/>
        <end position="827"/>
    </location>
</feature>
<feature type="DNA-binding region" description="Zn(2)-C6 fungal-type" evidence="1">
    <location>
        <begin position="16"/>
        <end position="42"/>
    </location>
</feature>
<feature type="region of interest" description="Disordered" evidence="2">
    <location>
        <begin position="80"/>
        <end position="114"/>
    </location>
</feature>
<feature type="region of interest" description="Disordered" evidence="2">
    <location>
        <begin position="158"/>
        <end position="193"/>
    </location>
</feature>
<feature type="region of interest" description="Disordered" evidence="2">
    <location>
        <begin position="794"/>
        <end position="827"/>
    </location>
</feature>
<feature type="compositionally biased region" description="Basic and acidic residues" evidence="2">
    <location>
        <begin position="102"/>
        <end position="112"/>
    </location>
</feature>
<feature type="compositionally biased region" description="Low complexity" evidence="2">
    <location>
        <begin position="159"/>
        <end position="179"/>
    </location>
</feature>
<feature type="compositionally biased region" description="Low complexity" evidence="2">
    <location>
        <begin position="811"/>
        <end position="827"/>
    </location>
</feature>
<feature type="modified residue" description="Phosphoserine" evidence="4">
    <location>
        <position position="112"/>
    </location>
</feature>
<sequence length="827" mass="94566">MSSGDVSRRQRVSRACDECHRRKIKCDQRRPCSNCIAYNYECTYGQPFKRLRHAPEKYIEFLELRLKYLRGLAEESDPNLKLPSFLAPPNDKDSPVNQSPWKRSDSSKRSSSQDEFESLFDRYGQLSLKDDGKADFRGSSSGFVFMKNIHQNIARNSTVPNPVQESNSSSSQPDPLSFPYLPPTPAEDEHKKPPLKIQLPPYEEALSIVSQFFMNDHFLVHIHHPASFFEKMHMYYKTGKTDNNFHFLLVATLCLGYTYMPDESPSANYPYHEAYEYYYYIRSSFSWEDSYTIEVVQILLSVALFALFSSRLSQAYTFTNNALLCCHELGLHKDFSDVLTSHESRLSKRVFYSVYVLACYTSTIVGLPLSIEDVDIDQSLPNSFDFTLENDQVPPRLIASECTSLEVFIQHITLSRILSHFVRKVYPVKSPSDSHCKVSLPAVRDHEEKLTYWWKNLPSYLKMSEVPKFSPKWIQAIILELKFRQIELIFYRPFIHSISTPIDNQNGSPMKPANFALKCAQSAERVVFLLQELAKSPNTPKLFFNLYSGYYALMTLTYCATLTKDDANKSNNFITKARLGFHCLQMIYRESTYYSTIMEAIKNLLIAYDMNSSGTENLDATPDVTGQLPNNFSQRTSNIPREFPQAQIFYSDAPYPGYYNPAQFQNAPTNFPMPTYGGRTQDQSYPRQNGYPSYSDGNVYPHDRVMINYGSSMPTANGFYVPNTYSPVPFPYNTSYPPYMSPTSNMPQAFQAYSQYPYQHPPFPLSEQMLPLPTSGVMMAPGAAKSGMPYPFIQPPSMTNQVAYPTVRDGSNNSPDHPSSSNSKRTE</sequence>
<gene>
    <name type="ORF">SPBC16G5.16</name>
</gene>
<reference key="1">
    <citation type="journal article" date="2002" name="Nature">
        <title>The genome sequence of Schizosaccharomyces pombe.</title>
        <authorList>
            <person name="Wood V."/>
            <person name="Gwilliam R."/>
            <person name="Rajandream M.A."/>
            <person name="Lyne M.H."/>
            <person name="Lyne R."/>
            <person name="Stewart A."/>
            <person name="Sgouros J.G."/>
            <person name="Peat N."/>
            <person name="Hayles J."/>
            <person name="Baker S.G."/>
            <person name="Basham D."/>
            <person name="Bowman S."/>
            <person name="Brooks K."/>
            <person name="Brown D."/>
            <person name="Brown S."/>
            <person name="Chillingworth T."/>
            <person name="Churcher C.M."/>
            <person name="Collins M."/>
            <person name="Connor R."/>
            <person name="Cronin A."/>
            <person name="Davis P."/>
            <person name="Feltwell T."/>
            <person name="Fraser A."/>
            <person name="Gentles S."/>
            <person name="Goble A."/>
            <person name="Hamlin N."/>
            <person name="Harris D.E."/>
            <person name="Hidalgo J."/>
            <person name="Hodgson G."/>
            <person name="Holroyd S."/>
            <person name="Hornsby T."/>
            <person name="Howarth S."/>
            <person name="Huckle E.J."/>
            <person name="Hunt S."/>
            <person name="Jagels K."/>
            <person name="James K.D."/>
            <person name="Jones L."/>
            <person name="Jones M."/>
            <person name="Leather S."/>
            <person name="McDonald S."/>
            <person name="McLean J."/>
            <person name="Mooney P."/>
            <person name="Moule S."/>
            <person name="Mungall K.L."/>
            <person name="Murphy L.D."/>
            <person name="Niblett D."/>
            <person name="Odell C."/>
            <person name="Oliver K."/>
            <person name="O'Neil S."/>
            <person name="Pearson D."/>
            <person name="Quail M.A."/>
            <person name="Rabbinowitsch E."/>
            <person name="Rutherford K.M."/>
            <person name="Rutter S."/>
            <person name="Saunders D."/>
            <person name="Seeger K."/>
            <person name="Sharp S."/>
            <person name="Skelton J."/>
            <person name="Simmonds M.N."/>
            <person name="Squares R."/>
            <person name="Squares S."/>
            <person name="Stevens K."/>
            <person name="Taylor K."/>
            <person name="Taylor R.G."/>
            <person name="Tivey A."/>
            <person name="Walsh S.V."/>
            <person name="Warren T."/>
            <person name="Whitehead S."/>
            <person name="Woodward J.R."/>
            <person name="Volckaert G."/>
            <person name="Aert R."/>
            <person name="Robben J."/>
            <person name="Grymonprez B."/>
            <person name="Weltjens I."/>
            <person name="Vanstreels E."/>
            <person name="Rieger M."/>
            <person name="Schaefer M."/>
            <person name="Mueller-Auer S."/>
            <person name="Gabel C."/>
            <person name="Fuchs M."/>
            <person name="Duesterhoeft A."/>
            <person name="Fritzc C."/>
            <person name="Holzer E."/>
            <person name="Moestl D."/>
            <person name="Hilbert H."/>
            <person name="Borzym K."/>
            <person name="Langer I."/>
            <person name="Beck A."/>
            <person name="Lehrach H."/>
            <person name="Reinhardt R."/>
            <person name="Pohl T.M."/>
            <person name="Eger P."/>
            <person name="Zimmermann W."/>
            <person name="Wedler H."/>
            <person name="Wambutt R."/>
            <person name="Purnelle B."/>
            <person name="Goffeau A."/>
            <person name="Cadieu E."/>
            <person name="Dreano S."/>
            <person name="Gloux S."/>
            <person name="Lelaure V."/>
            <person name="Mottier S."/>
            <person name="Galibert F."/>
            <person name="Aves S.J."/>
            <person name="Xiang Z."/>
            <person name="Hunt C."/>
            <person name="Moore K."/>
            <person name="Hurst S.M."/>
            <person name="Lucas M."/>
            <person name="Rochet M."/>
            <person name="Gaillardin C."/>
            <person name="Tallada V.A."/>
            <person name="Garzon A."/>
            <person name="Thode G."/>
            <person name="Daga R.R."/>
            <person name="Cruzado L."/>
            <person name="Jimenez J."/>
            <person name="Sanchez M."/>
            <person name="del Rey F."/>
            <person name="Benito J."/>
            <person name="Dominguez A."/>
            <person name="Revuelta J.L."/>
            <person name="Moreno S."/>
            <person name="Armstrong J."/>
            <person name="Forsburg S.L."/>
            <person name="Cerutti L."/>
            <person name="Lowe T."/>
            <person name="McCombie W.R."/>
            <person name="Paulsen I."/>
            <person name="Potashkin J."/>
            <person name="Shpakovski G.V."/>
            <person name="Ussery D."/>
            <person name="Barrell B.G."/>
            <person name="Nurse P."/>
        </authorList>
    </citation>
    <scope>NUCLEOTIDE SEQUENCE [LARGE SCALE GENOMIC DNA]</scope>
    <source>
        <strain>972 / ATCC 24843</strain>
    </source>
</reference>
<reference key="2">
    <citation type="journal article" date="2006" name="Nat. Biotechnol.">
        <title>ORFeome cloning and global analysis of protein localization in the fission yeast Schizosaccharomyces pombe.</title>
        <authorList>
            <person name="Matsuyama A."/>
            <person name="Arai R."/>
            <person name="Yashiroda Y."/>
            <person name="Shirai A."/>
            <person name="Kamata A."/>
            <person name="Sekido S."/>
            <person name="Kobayashi Y."/>
            <person name="Hashimoto A."/>
            <person name="Hamamoto M."/>
            <person name="Hiraoka Y."/>
            <person name="Horinouchi S."/>
            <person name="Yoshida M."/>
        </authorList>
    </citation>
    <scope>SUBCELLULAR LOCATION [LARGE SCALE ANALYSIS]</scope>
</reference>
<reference key="3">
    <citation type="journal article" date="2008" name="J. Proteome Res.">
        <title>Phosphoproteome analysis of fission yeast.</title>
        <authorList>
            <person name="Wilson-Grady J.T."/>
            <person name="Villen J."/>
            <person name="Gygi S.P."/>
        </authorList>
    </citation>
    <scope>PHOSPHORYLATION [LARGE SCALE ANALYSIS] AT SER-112</scope>
    <scope>IDENTIFICATION BY MASS SPECTROMETRY</scope>
</reference>
<accession>O60130</accession>
<organism>
    <name type="scientific">Schizosaccharomyces pombe (strain 972 / ATCC 24843)</name>
    <name type="common">Fission yeast</name>
    <dbReference type="NCBI Taxonomy" id="284812"/>
    <lineage>
        <taxon>Eukaryota</taxon>
        <taxon>Fungi</taxon>
        <taxon>Dikarya</taxon>
        <taxon>Ascomycota</taxon>
        <taxon>Taphrinomycotina</taxon>
        <taxon>Schizosaccharomycetes</taxon>
        <taxon>Schizosaccharomycetales</taxon>
        <taxon>Schizosaccharomycetaceae</taxon>
        <taxon>Schizosaccharomyces</taxon>
    </lineage>
</organism>
<proteinExistence type="evidence at protein level"/>
<protein>
    <recommendedName>
        <fullName>Putative transcriptional regulatory protein C16G5.16</fullName>
    </recommendedName>
</protein>
<keyword id="KW-0963">Cytoplasm</keyword>
<keyword id="KW-0238">DNA-binding</keyword>
<keyword id="KW-0479">Metal-binding</keyword>
<keyword id="KW-0539">Nucleus</keyword>
<keyword id="KW-0597">Phosphoprotein</keyword>
<keyword id="KW-1185">Reference proteome</keyword>
<keyword id="KW-0804">Transcription</keyword>
<keyword id="KW-0805">Transcription regulation</keyword>
<keyword id="KW-0862">Zinc</keyword>